<accession>Q148F8</accession>
<accession>A1A4M7</accession>
<comment type="function">
    <text evidence="1 5">Small heat shock protein which functions as a molecular chaperone probably maintaining denatured proteins in a folding-competent state. Seems to have versatile functions in various biological processes. Plays a role in regulating muscle function such as smooth muscle vasorelaxation and cardiac myocyte contractility. May regulate myocardial angiogenesis implicating KDR. Overexpression mediates cardioprotection and angiogenesis after induced damage. Stabilizes monomeric YWHAZ thereby supporting YWHAZ chaperone-like activity.</text>
</comment>
<comment type="subunit">
    <text evidence="1 2">Homodimer. Small heat shock proteins form high molecular mass oligomers containing variable number of monomers; these oligomers display a very flexible quaternary structure easily exchanging their subunits. Heterooligomer with HSPB1; formed through oligomerization of HSPB1:HSBP6 dimers; subunit exchange leads to formation of at least two different heterooligomeric complexes, differing in variable quantities of HSPB1 and HSPB6 homodimers in addition to HSPB1:HSPB6 heterodimers. Heterooligomer with CRYAB; large heterooligomers consist of CRYAB homodimers and HSPB5:HSPB6 heterodimers but lacking HSPB6 homodimers. Interacts with BAG3. Interacts (phosphorylated) with YWHAZ. Interacts with PDE4A and PDE4D; required for maintenance of the non-phosphorylated state of HSPB6 under basal conditions. Interacts with KDR. Interacts with PRKD1.</text>
</comment>
<comment type="subcellular location">
    <subcellularLocation>
        <location evidence="1">Cytoplasm</location>
    </subcellularLocation>
    <subcellularLocation>
        <location evidence="1">Nucleus</location>
    </subcellularLocation>
    <subcellularLocation>
        <location evidence="1">Secreted</location>
    </subcellularLocation>
    <text evidence="1">Translocates to nuclear foci during heat shock.</text>
</comment>
<comment type="PTM">
    <text evidence="1 2 3">Phosphorylated at Ser-16 by PKA and probably PKD1K; required to protect cardiomyocytes from apoptosis.</text>
</comment>
<comment type="similarity">
    <text evidence="4">Belongs to the small heat shock protein (HSP20) family.</text>
</comment>
<dbReference type="EMBL" id="BC118368">
    <property type="protein sequence ID" value="AAI18369.1"/>
    <property type="molecule type" value="mRNA"/>
</dbReference>
<dbReference type="EMBL" id="BC126729">
    <property type="protein sequence ID" value="AAI26730.1"/>
    <property type="molecule type" value="mRNA"/>
</dbReference>
<dbReference type="RefSeq" id="NP_001069495.1">
    <property type="nucleotide sequence ID" value="NM_001076027.1"/>
</dbReference>
<dbReference type="SMR" id="Q148F8"/>
<dbReference type="FunCoup" id="Q148F8">
    <property type="interactions" value="94"/>
</dbReference>
<dbReference type="STRING" id="9913.ENSBTAP00000024749"/>
<dbReference type="iPTMnet" id="Q148F8"/>
<dbReference type="PaxDb" id="9913-ENSBTAP00000024749"/>
<dbReference type="PeptideAtlas" id="Q148F8"/>
<dbReference type="GeneID" id="534551"/>
<dbReference type="KEGG" id="bta:534551"/>
<dbReference type="CTD" id="126393"/>
<dbReference type="eggNOG" id="KOG3591">
    <property type="taxonomic scope" value="Eukaryota"/>
</dbReference>
<dbReference type="HOGENOM" id="CLU_095001_2_0_1"/>
<dbReference type="InParanoid" id="Q148F8"/>
<dbReference type="OrthoDB" id="1431247at2759"/>
<dbReference type="TreeFam" id="TF105049"/>
<dbReference type="Proteomes" id="UP000009136">
    <property type="component" value="Unplaced"/>
</dbReference>
<dbReference type="GO" id="GO:0005737">
    <property type="term" value="C:cytoplasm"/>
    <property type="evidence" value="ECO:0000250"/>
    <property type="project" value="UniProtKB"/>
</dbReference>
<dbReference type="GO" id="GO:0005576">
    <property type="term" value="C:extracellular region"/>
    <property type="evidence" value="ECO:0007669"/>
    <property type="project" value="UniProtKB-SubCell"/>
</dbReference>
<dbReference type="GO" id="GO:0005634">
    <property type="term" value="C:nucleus"/>
    <property type="evidence" value="ECO:0000250"/>
    <property type="project" value="UniProtKB"/>
</dbReference>
<dbReference type="GO" id="GO:0042803">
    <property type="term" value="F:protein homodimerization activity"/>
    <property type="evidence" value="ECO:0000250"/>
    <property type="project" value="UniProtKB"/>
</dbReference>
<dbReference type="GO" id="GO:0005212">
    <property type="term" value="F:structural constituent of eye lens"/>
    <property type="evidence" value="ECO:0007669"/>
    <property type="project" value="InterPro"/>
</dbReference>
<dbReference type="GO" id="GO:0051082">
    <property type="term" value="F:unfolded protein binding"/>
    <property type="evidence" value="ECO:0000318"/>
    <property type="project" value="GO_Central"/>
</dbReference>
<dbReference type="GO" id="GO:0043066">
    <property type="term" value="P:negative regulation of apoptotic process"/>
    <property type="evidence" value="ECO:0000318"/>
    <property type="project" value="GO_Central"/>
</dbReference>
<dbReference type="GO" id="GO:0042026">
    <property type="term" value="P:protein refolding"/>
    <property type="evidence" value="ECO:0000318"/>
    <property type="project" value="GO_Central"/>
</dbReference>
<dbReference type="GO" id="GO:0009408">
    <property type="term" value="P:response to heat"/>
    <property type="evidence" value="ECO:0000318"/>
    <property type="project" value="GO_Central"/>
</dbReference>
<dbReference type="FunFam" id="2.60.40.790:FF:000029">
    <property type="entry name" value="Putative heat shock protein beta-6"/>
    <property type="match status" value="1"/>
</dbReference>
<dbReference type="Gene3D" id="2.60.40.790">
    <property type="match status" value="1"/>
</dbReference>
<dbReference type="InterPro" id="IPR002068">
    <property type="entry name" value="A-crystallin/Hsp20_dom"/>
</dbReference>
<dbReference type="InterPro" id="IPR001436">
    <property type="entry name" value="Alpha-crystallin/sHSP_animal"/>
</dbReference>
<dbReference type="InterPro" id="IPR003090">
    <property type="entry name" value="Alpha-crystallin_N"/>
</dbReference>
<dbReference type="InterPro" id="IPR008978">
    <property type="entry name" value="HSP20-like_chaperone"/>
</dbReference>
<dbReference type="PANTHER" id="PTHR45640:SF36">
    <property type="entry name" value="HEAT SHOCK PROTEIN BETA-6"/>
    <property type="match status" value="1"/>
</dbReference>
<dbReference type="PANTHER" id="PTHR45640">
    <property type="entry name" value="HEAT SHOCK PROTEIN HSP-12.2-RELATED"/>
    <property type="match status" value="1"/>
</dbReference>
<dbReference type="Pfam" id="PF00525">
    <property type="entry name" value="Crystallin"/>
    <property type="match status" value="1"/>
</dbReference>
<dbReference type="Pfam" id="PF00011">
    <property type="entry name" value="HSP20"/>
    <property type="match status" value="1"/>
</dbReference>
<dbReference type="PRINTS" id="PR00299">
    <property type="entry name" value="ACRYSTALLIN"/>
</dbReference>
<dbReference type="SUPFAM" id="SSF49764">
    <property type="entry name" value="HSP20-like chaperones"/>
    <property type="match status" value="1"/>
</dbReference>
<dbReference type="PROSITE" id="PS01031">
    <property type="entry name" value="SHSP"/>
    <property type="match status" value="1"/>
</dbReference>
<proteinExistence type="evidence at transcript level"/>
<name>HSPB6_BOVIN</name>
<organism>
    <name type="scientific">Bos taurus</name>
    <name type="common">Bovine</name>
    <dbReference type="NCBI Taxonomy" id="9913"/>
    <lineage>
        <taxon>Eukaryota</taxon>
        <taxon>Metazoa</taxon>
        <taxon>Chordata</taxon>
        <taxon>Craniata</taxon>
        <taxon>Vertebrata</taxon>
        <taxon>Euteleostomi</taxon>
        <taxon>Mammalia</taxon>
        <taxon>Eutheria</taxon>
        <taxon>Laurasiatheria</taxon>
        <taxon>Artiodactyla</taxon>
        <taxon>Ruminantia</taxon>
        <taxon>Pecora</taxon>
        <taxon>Bovidae</taxon>
        <taxon>Bovinae</taxon>
        <taxon>Bos</taxon>
    </lineage>
</organism>
<sequence>MEIPVSVQPSWLRRASAPLPGLSAPGRLFDQRFGEGLLEAELAALCPAALAPYYLRAPSVALPTAQVSTDPGHFSVLLDVKHFSPEEIAVKVVGDHVEVHARHEERPDEHGYIAREFHRRYRLPPGVDPAAVTSALSPEGVLSIQAAPAPAQAPLQSPPGAAAK</sequence>
<gene>
    <name type="primary">HSPB6</name>
</gene>
<evidence type="ECO:0000250" key="1">
    <source>
        <dbReference type="UniProtKB" id="O14558"/>
    </source>
</evidence>
<evidence type="ECO:0000250" key="2">
    <source>
        <dbReference type="UniProtKB" id="P97541"/>
    </source>
</evidence>
<evidence type="ECO:0000250" key="3">
    <source>
        <dbReference type="UniProtKB" id="Q5EBG6"/>
    </source>
</evidence>
<evidence type="ECO:0000255" key="4">
    <source>
        <dbReference type="PROSITE-ProRule" id="PRU00285"/>
    </source>
</evidence>
<evidence type="ECO:0000269" key="5">
    <source>
    </source>
</evidence>
<evidence type="ECO:0000305" key="6"/>
<feature type="chain" id="PRO_0000252667" description="Heat shock protein beta-6">
    <location>
        <begin position="1"/>
        <end position="164"/>
    </location>
</feature>
<feature type="domain" description="sHSP" evidence="4">
    <location>
        <begin position="56"/>
        <end position="163"/>
    </location>
</feature>
<feature type="region of interest" description="Involved in stabilization of the HSPB1:HSBP6 heterodimer" evidence="1">
    <location>
        <begin position="1"/>
        <end position="72"/>
    </location>
</feature>
<feature type="modified residue" description="Phosphoserine" evidence="1">
    <location>
        <position position="16"/>
    </location>
</feature>
<feature type="modified residue" description="Deamidated glutamine" evidence="2">
    <location>
        <position position="66"/>
    </location>
</feature>
<feature type="modified residue" description="Phosphoserine" evidence="2">
    <location>
        <position position="157"/>
    </location>
</feature>
<feature type="sequence conflict" description="In Ref. 1; AAI26730." evidence="6" ref="1">
    <original>S</original>
    <variation>P</variation>
    <location>
        <position position="6"/>
    </location>
</feature>
<keyword id="KW-0143">Chaperone</keyword>
<keyword id="KW-0963">Cytoplasm</keyword>
<keyword id="KW-0539">Nucleus</keyword>
<keyword id="KW-0597">Phosphoprotein</keyword>
<keyword id="KW-1185">Reference proteome</keyword>
<keyword id="KW-0964">Secreted</keyword>
<keyword id="KW-0346">Stress response</keyword>
<reference key="1">
    <citation type="submission" date="2006-10" db="EMBL/GenBank/DDBJ databases">
        <authorList>
            <consortium name="NIH - Mammalian Gene Collection (MGC) project"/>
        </authorList>
    </citation>
    <scope>NUCLEOTIDE SEQUENCE [LARGE SCALE MRNA]</scope>
    <source>
        <strain>Hereford</strain>
        <tissue>Fetal muscle</tissue>
        <tissue>Fetal pons</tissue>
    </source>
</reference>
<reference key="2">
    <citation type="journal article" date="2005" name="Protein Sci.">
        <title>Hsp20, a novel alpha-crystallin, prevents Abeta fibril formation and toxicity.</title>
        <authorList>
            <person name="Lee S."/>
            <person name="Carson K."/>
            <person name="Rice-Ficht A."/>
            <person name="Good T."/>
        </authorList>
    </citation>
    <scope>FUNCTION</scope>
</reference>
<protein>
    <recommendedName>
        <fullName>Heat shock protein beta-6</fullName>
        <shortName>HspB6</shortName>
    </recommendedName>
</protein>